<evidence type="ECO:0000250" key="1">
    <source>
        <dbReference type="UniProtKB" id="P04798"/>
    </source>
</evidence>
<evidence type="ECO:0000255" key="2"/>
<evidence type="ECO:0000256" key="3">
    <source>
        <dbReference type="SAM" id="MobiDB-lite"/>
    </source>
</evidence>
<evidence type="ECO:0000269" key="4">
    <source>
    </source>
</evidence>
<evidence type="ECO:0000269" key="5">
    <source>
    </source>
</evidence>
<evidence type="ECO:0000303" key="6">
    <source>
    </source>
</evidence>
<evidence type="ECO:0000305" key="7"/>
<evidence type="ECO:0000305" key="8">
    <source>
    </source>
</evidence>
<proteinExistence type="evidence at transcript level"/>
<feature type="chain" id="PRO_0000450162" description="Cytochrome P450 monooxygenase verL">
    <location>
        <begin position="1"/>
        <end position="544"/>
    </location>
</feature>
<feature type="transmembrane region" description="Helical" evidence="2">
    <location>
        <begin position="3"/>
        <end position="23"/>
    </location>
</feature>
<feature type="region of interest" description="Disordered" evidence="3">
    <location>
        <begin position="520"/>
        <end position="544"/>
    </location>
</feature>
<feature type="binding site" description="axial binding residue" evidence="1">
    <location>
        <position position="446"/>
    </location>
    <ligand>
        <name>heme</name>
        <dbReference type="ChEBI" id="CHEBI:30413"/>
    </ligand>
    <ligandPart>
        <name>Fe</name>
        <dbReference type="ChEBI" id="CHEBI:18248"/>
    </ligandPart>
</feature>
<reference key="1">
    <citation type="journal article" date="2017" name="Fungal Genet. Biol.">
        <title>Identification and characterization of the verticillin biosynthetic gene cluster in Clonostachys rogersoniana.</title>
        <authorList>
            <person name="Wang Y."/>
            <person name="Hu P."/>
            <person name="Pan Y."/>
            <person name="Zhu Y."/>
            <person name="Liu X."/>
            <person name="Che Y."/>
            <person name="Liu G."/>
        </authorList>
    </citation>
    <scope>NUCLEOTIDE SEQUENCE [GENOMIC DNA]</scope>
    <scope>FUNCTION</scope>
    <scope>DISRUPTION PHENOTYPE</scope>
    <scope>PATHWAY</scope>
    <source>
        <strain>XZC04-CC-302</strain>
    </source>
</reference>
<reference key="2">
    <citation type="journal article" date="2017" name="Microbiology">
        <title>VerZ, a Zn(II)2Cys6 DNA-binding protein, regulates the biosynthesis of verticillin in Clonostachys rogersoniana.</title>
        <authorList>
            <person name="Guo Z."/>
            <person name="Hao T."/>
            <person name="Wang Y."/>
            <person name="Pan Y."/>
            <person name="Ren F."/>
            <person name="Liu X."/>
            <person name="Che Y."/>
            <person name="Liu G."/>
        </authorList>
    </citation>
    <scope>INDUCTION</scope>
</reference>
<comment type="function">
    <text evidence="4 8">Cytochrome P450 monooxygenase; part of the gene cluster that mediates the biosynthesis of 11'-deoxyverticillin A, one of the dimeric epipolythiodioxopiperazines (ETPs) from the verticillin family that act as mycotoxins (PubMed:28376389). 11'-deoxyverticillin A is required for normal conidiation (PubMed:28376389). The nonribosomal peptide synthetase verP is speculated to be responsible for condensation of amino acids to form the carbon skeleton of verticillin, whereas the cluster-specific tailoring enzymes are involved in further modifications leading to the production of 11'-deoxyverticillin A (Probable).</text>
</comment>
<comment type="cofactor">
    <cofactor evidence="1">
        <name>heme</name>
        <dbReference type="ChEBI" id="CHEBI:30413"/>
    </cofactor>
</comment>
<comment type="pathway">
    <text evidence="4">Mycotoxin biosynthesis.</text>
</comment>
<comment type="subcellular location">
    <subcellularLocation>
        <location evidence="2">Membrane</location>
        <topology evidence="2">Single-pass membrane protein</topology>
    </subcellularLocation>
</comment>
<comment type="induction">
    <text evidence="5">Expression is regulated by the cluster-specific regulator verZ.</text>
</comment>
<comment type="disruption phenotype">
    <text evidence="4">Completely abolishes the 11'-deoxyverticillin A production.</text>
</comment>
<comment type="similarity">
    <text evidence="7">Belongs to the cytochrome P450 family.</text>
</comment>
<protein>
    <recommendedName>
        <fullName evidence="6">Cytochrome P450 monooxygenase verL</fullName>
        <ecNumber evidence="8">1.-.-.-</ecNumber>
    </recommendedName>
    <alternativeName>
        <fullName evidence="6">Verticillin biosynthesis cluster protein L</fullName>
    </alternativeName>
</protein>
<gene>
    <name evidence="6" type="primary">verL</name>
</gene>
<sequence>MAVALFPILPIGCLLIYIIFKLWTRDERLKHLPPGPKGLPVIGNMLDMADTDKMMKKSKDWADEYGEIFYTKVGLYNFVWLSSPNAVRELMDKKGSIYSSRPPSPMINMVSNGERLNFLPYGHKWRTIRNILHSALNLETSSTYKPVQDFESKQALWEILHAKDDMEFNDINRRYSTSTIMTITYGLRVPTLQHPLYQDILTIVRHFSLATAPGEWVIDMVPMLADIVPQFLLQNWKNVARKWYKEDSEIYLALYNKLMDDIKRGTAPDCFLKDMAREKLKKNPIADTTAAFAAGALIEAGSDATTTALNNVVLACLLYPEIVKGAHEELDRVVGSDRMPEFSDEPNLPYIRGIAKETLRWRASTKVGPAHATTQDDWYNGYFIPKGTGVVLNWWAIHMNEKRWKDPERFDPTRYLEDTLTEAESMAQPNPELRDHFTFGAGRRNCPGVHIAHNSLFINIARIFWAFNKQKSKDADGKILEPSTAAQPGFLLTPVKFPCHFEARSDKHARIIEERWTEAQEKGIDGWKGKKESSSEENRGVSSR</sequence>
<dbReference type="EC" id="1.-.-.-" evidence="8"/>
<dbReference type="EMBL" id="KY359203">
    <property type="protein sequence ID" value="AQZ42158.1"/>
    <property type="molecule type" value="Genomic_DNA"/>
</dbReference>
<dbReference type="SMR" id="A0A1U9YHZ8"/>
<dbReference type="GO" id="GO:0016020">
    <property type="term" value="C:membrane"/>
    <property type="evidence" value="ECO:0007669"/>
    <property type="project" value="UniProtKB-SubCell"/>
</dbReference>
<dbReference type="GO" id="GO:0020037">
    <property type="term" value="F:heme binding"/>
    <property type="evidence" value="ECO:0007669"/>
    <property type="project" value="InterPro"/>
</dbReference>
<dbReference type="GO" id="GO:0005506">
    <property type="term" value="F:iron ion binding"/>
    <property type="evidence" value="ECO:0007669"/>
    <property type="project" value="InterPro"/>
</dbReference>
<dbReference type="GO" id="GO:0004497">
    <property type="term" value="F:monooxygenase activity"/>
    <property type="evidence" value="ECO:0007669"/>
    <property type="project" value="UniProtKB-KW"/>
</dbReference>
<dbReference type="GO" id="GO:0016705">
    <property type="term" value="F:oxidoreductase activity, acting on paired donors, with incorporation or reduction of molecular oxygen"/>
    <property type="evidence" value="ECO:0007669"/>
    <property type="project" value="InterPro"/>
</dbReference>
<dbReference type="CDD" id="cd11065">
    <property type="entry name" value="CYP64-like"/>
    <property type="match status" value="1"/>
</dbReference>
<dbReference type="Gene3D" id="1.10.630.10">
    <property type="entry name" value="Cytochrome P450"/>
    <property type="match status" value="1"/>
</dbReference>
<dbReference type="InterPro" id="IPR001128">
    <property type="entry name" value="Cyt_P450"/>
</dbReference>
<dbReference type="InterPro" id="IPR017972">
    <property type="entry name" value="Cyt_P450_CS"/>
</dbReference>
<dbReference type="InterPro" id="IPR002401">
    <property type="entry name" value="Cyt_P450_E_grp-I"/>
</dbReference>
<dbReference type="InterPro" id="IPR036396">
    <property type="entry name" value="Cyt_P450_sf"/>
</dbReference>
<dbReference type="InterPro" id="IPR050364">
    <property type="entry name" value="Cytochrome_P450_fung"/>
</dbReference>
<dbReference type="PANTHER" id="PTHR46300:SF2">
    <property type="entry name" value="CYTOCHROME P450 MONOOXYGENASE ALNH-RELATED"/>
    <property type="match status" value="1"/>
</dbReference>
<dbReference type="PANTHER" id="PTHR46300">
    <property type="entry name" value="P450, PUTATIVE (EUROFUNG)-RELATED-RELATED"/>
    <property type="match status" value="1"/>
</dbReference>
<dbReference type="Pfam" id="PF00067">
    <property type="entry name" value="p450"/>
    <property type="match status" value="1"/>
</dbReference>
<dbReference type="PRINTS" id="PR00463">
    <property type="entry name" value="EP450I"/>
</dbReference>
<dbReference type="SUPFAM" id="SSF48264">
    <property type="entry name" value="Cytochrome P450"/>
    <property type="match status" value="1"/>
</dbReference>
<dbReference type="PROSITE" id="PS00086">
    <property type="entry name" value="CYTOCHROME_P450"/>
    <property type="match status" value="1"/>
</dbReference>
<name>VERL_CLORO</name>
<organism>
    <name type="scientific">Clonostachys rogersoniana</name>
    <dbReference type="NCBI Taxonomy" id="122658"/>
    <lineage>
        <taxon>Eukaryota</taxon>
        <taxon>Fungi</taxon>
        <taxon>Dikarya</taxon>
        <taxon>Ascomycota</taxon>
        <taxon>Pezizomycotina</taxon>
        <taxon>Sordariomycetes</taxon>
        <taxon>Hypocreomycetidae</taxon>
        <taxon>Hypocreales</taxon>
        <taxon>Bionectriaceae</taxon>
        <taxon>Clonostachys</taxon>
    </lineage>
</organism>
<accession>A0A1U9YHZ8</accession>
<keyword id="KW-0349">Heme</keyword>
<keyword id="KW-0408">Iron</keyword>
<keyword id="KW-0472">Membrane</keyword>
<keyword id="KW-0479">Metal-binding</keyword>
<keyword id="KW-0503">Monooxygenase</keyword>
<keyword id="KW-0560">Oxidoreductase</keyword>
<keyword id="KW-0812">Transmembrane</keyword>
<keyword id="KW-1133">Transmembrane helix</keyword>